<gene>
    <name type="primary">rpmB</name>
    <name type="synonym">rl28</name>
    <name type="ordered locus">SPs0238</name>
</gene>
<organism>
    <name type="scientific">Streptococcus pyogenes serotype M3 (strain SSI-1)</name>
    <dbReference type="NCBI Taxonomy" id="193567"/>
    <lineage>
        <taxon>Bacteria</taxon>
        <taxon>Bacillati</taxon>
        <taxon>Bacillota</taxon>
        <taxon>Bacilli</taxon>
        <taxon>Lactobacillales</taxon>
        <taxon>Streptococcaceae</taxon>
        <taxon>Streptococcus</taxon>
    </lineage>
</organism>
<protein>
    <recommendedName>
        <fullName evidence="1">Large ribosomal subunit protein bL28</fullName>
    </recommendedName>
    <alternativeName>
        <fullName>50S ribosomal protein L28</fullName>
    </alternativeName>
</protein>
<reference key="1">
    <citation type="journal article" date="2003" name="Genome Res.">
        <title>Genome sequence of an M3 strain of Streptococcus pyogenes reveals a large-scale genomic rearrangement in invasive strains and new insights into phage evolution.</title>
        <authorList>
            <person name="Nakagawa I."/>
            <person name="Kurokawa K."/>
            <person name="Yamashita A."/>
            <person name="Nakata M."/>
            <person name="Tomiyasu Y."/>
            <person name="Okahashi N."/>
            <person name="Kawabata S."/>
            <person name="Yamazaki K."/>
            <person name="Shiba T."/>
            <person name="Yasunaga T."/>
            <person name="Hayashi H."/>
            <person name="Hattori M."/>
            <person name="Hamada S."/>
        </authorList>
    </citation>
    <scope>NUCLEOTIDE SEQUENCE [LARGE SCALE GENOMIC DNA]</scope>
    <source>
        <strain>SSI-1</strain>
    </source>
</reference>
<comment type="similarity">
    <text evidence="1">Belongs to the bacterial ribosomal protein bL28 family.</text>
</comment>
<sequence length="62" mass="6928">MAKVCYFTGRKTVSGNNRSHAMNQTKRTVKPNLQKVTILVDGKPKKVWASARALKSGKVERI</sequence>
<name>RL28_STRPQ</name>
<feature type="chain" id="PRO_0000411505" description="Large ribosomal subunit protein bL28">
    <location>
        <begin position="1"/>
        <end position="62"/>
    </location>
</feature>
<keyword id="KW-0687">Ribonucleoprotein</keyword>
<keyword id="KW-0689">Ribosomal protein</keyword>
<accession>P0DE31</accession>
<accession>P58087</accession>
<accession>P66158</accession>
<proteinExistence type="inferred from homology"/>
<dbReference type="EMBL" id="BA000034">
    <property type="protein sequence ID" value="BAC63333.1"/>
    <property type="molecule type" value="Genomic_DNA"/>
</dbReference>
<dbReference type="RefSeq" id="WP_002982870.1">
    <property type="nucleotide sequence ID" value="NC_004606.1"/>
</dbReference>
<dbReference type="SMR" id="P0DE31"/>
<dbReference type="GeneID" id="83705580"/>
<dbReference type="KEGG" id="sps:SPs0238"/>
<dbReference type="HOGENOM" id="CLU_064548_7_1_9"/>
<dbReference type="GO" id="GO:1990904">
    <property type="term" value="C:ribonucleoprotein complex"/>
    <property type="evidence" value="ECO:0007669"/>
    <property type="project" value="UniProtKB-KW"/>
</dbReference>
<dbReference type="GO" id="GO:0005840">
    <property type="term" value="C:ribosome"/>
    <property type="evidence" value="ECO:0007669"/>
    <property type="project" value="UniProtKB-KW"/>
</dbReference>
<dbReference type="GO" id="GO:0003735">
    <property type="term" value="F:structural constituent of ribosome"/>
    <property type="evidence" value="ECO:0007669"/>
    <property type="project" value="InterPro"/>
</dbReference>
<dbReference type="GO" id="GO:0006412">
    <property type="term" value="P:translation"/>
    <property type="evidence" value="ECO:0007669"/>
    <property type="project" value="UniProtKB-UniRule"/>
</dbReference>
<dbReference type="Gene3D" id="2.30.170.40">
    <property type="entry name" value="Ribosomal protein L28/L24"/>
    <property type="match status" value="1"/>
</dbReference>
<dbReference type="HAMAP" id="MF_00373">
    <property type="entry name" value="Ribosomal_bL28"/>
    <property type="match status" value="1"/>
</dbReference>
<dbReference type="InterPro" id="IPR050096">
    <property type="entry name" value="Bacterial_rp_bL28"/>
</dbReference>
<dbReference type="InterPro" id="IPR026569">
    <property type="entry name" value="Ribosomal_bL28"/>
</dbReference>
<dbReference type="InterPro" id="IPR034704">
    <property type="entry name" value="Ribosomal_bL28/bL31-like_sf"/>
</dbReference>
<dbReference type="InterPro" id="IPR001383">
    <property type="entry name" value="Ribosomal_bL28_bact-type"/>
</dbReference>
<dbReference type="InterPro" id="IPR037147">
    <property type="entry name" value="Ribosomal_bL28_sf"/>
</dbReference>
<dbReference type="NCBIfam" id="TIGR00009">
    <property type="entry name" value="L28"/>
    <property type="match status" value="1"/>
</dbReference>
<dbReference type="PANTHER" id="PTHR39080">
    <property type="entry name" value="50S RIBOSOMAL PROTEIN L28"/>
    <property type="match status" value="1"/>
</dbReference>
<dbReference type="PANTHER" id="PTHR39080:SF1">
    <property type="entry name" value="LARGE RIBOSOMAL SUBUNIT PROTEIN BL28A"/>
    <property type="match status" value="1"/>
</dbReference>
<dbReference type="Pfam" id="PF00830">
    <property type="entry name" value="Ribosomal_L28"/>
    <property type="match status" value="1"/>
</dbReference>
<dbReference type="SUPFAM" id="SSF143800">
    <property type="entry name" value="L28p-like"/>
    <property type="match status" value="1"/>
</dbReference>
<evidence type="ECO:0000305" key="1"/>